<name>NSCA_TRIT1</name>
<accession>F2S6Z9</accession>
<comment type="function">
    <text evidence="2 9 11">Non-reducing polyketide synthase; part of the gene cluster that mediates the biosynthesis of neosartoricin B, a prenylated anthracenone that probably exhibits T-cell antiproliferative activity, suggestive of a physiological role as an immunosuppressive agent (PubMed:23368997, PubMed:23758576). The non-reducing polyketide synthase nscA probably synthesizes and cyclizes the decaketide backbone (By similarity). The hydrolase nscB then mediates the product release through hydrolysis followed by spontaneous decarboxylation (By similarity). The prenyltransferase nscD catalyzes the addition of the dimethylallyl group to the aromatic C5 (By similarity). The FAD-dependent monooxygenase nscC is then responsible for the stereospecific hydroxylation at C2 (By similarity). Neosartoricin B can be converted into two additional compounds neosartoricins C and D (PubMed:23758576). Neosartoricin C is a spirocyclic compound that is cyclized through the attack of C3 hydroxyl on C14, followed by dehydration (PubMed:23758576). On the other hand, neosartoricin D is a further cyclized compound in which attack of C2 on C14 in neosartoricin C results in the formation of the acetal-containing dioxabicyclo-octanone ring (PubMed:23758576). Both of these compounds are novel and possibly represent related metabolites of the gene cluster (PubMed:23758576).</text>
</comment>
<comment type="cofactor">
    <cofactor evidence="1">
        <name>pantetheine 4'-phosphate</name>
        <dbReference type="ChEBI" id="CHEBI:47942"/>
    </cofactor>
    <text evidence="4">Binds 1 phosphopantetheine covalently.</text>
</comment>
<comment type="pathway">
    <text evidence="9">Secondary metabolite biosynthesis.</text>
</comment>
<comment type="domain">
    <text evidence="3">Multidomain protein; including a starter unit:ACP transacylase (SAT) that selects the starter unit; a ketosynthase (KS) that catalyzes repeated decarboxylative condensation to elongate the polyketide backbone; a malonyl-CoA:ACP transacylase (MAT) that selects and transfers the extender unit malonyl-CoA; a product template (PT) domain that controls the immediate cyclization regioselectivity of the reactive polyketide backbone; and an acyl-carrier protein (ACP) that serves as the tether of the growing and completed polyketide via its phosphopantetheinyl arm (By similarity).</text>
</comment>
<gene>
    <name evidence="10" type="primary">nscA</name>
    <name type="ORF">TESG_06702</name>
</gene>
<proteinExistence type="inferred from homology"/>
<evidence type="ECO:0000250" key="1">
    <source>
        <dbReference type="UniProtKB" id="A0A0K0MCJ4"/>
    </source>
</evidence>
<evidence type="ECO:0000250" key="2">
    <source>
        <dbReference type="UniProtKB" id="A1D8I9"/>
    </source>
</evidence>
<evidence type="ECO:0000250" key="3">
    <source>
        <dbReference type="UniProtKB" id="Q5B0D0"/>
    </source>
</evidence>
<evidence type="ECO:0000255" key="4"/>
<evidence type="ECO:0000255" key="5">
    <source>
        <dbReference type="PROSITE-ProRule" id="PRU00258"/>
    </source>
</evidence>
<evidence type="ECO:0000255" key="6">
    <source>
        <dbReference type="PROSITE-ProRule" id="PRU01348"/>
    </source>
</evidence>
<evidence type="ECO:0000255" key="7">
    <source>
        <dbReference type="PROSITE-ProRule" id="PRU01363"/>
    </source>
</evidence>
<evidence type="ECO:0000256" key="8">
    <source>
        <dbReference type="SAM" id="MobiDB-lite"/>
    </source>
</evidence>
<evidence type="ECO:0000269" key="9">
    <source>
    </source>
</evidence>
<evidence type="ECO:0000303" key="10">
    <source>
    </source>
</evidence>
<evidence type="ECO:0000305" key="11">
    <source>
    </source>
</evidence>
<evidence type="ECO:0000305" key="12">
    <source>
    </source>
</evidence>
<dbReference type="EC" id="2.3.1.-" evidence="12"/>
<dbReference type="EMBL" id="GG698521">
    <property type="protein sequence ID" value="EGD99348.1"/>
    <property type="molecule type" value="Genomic_DNA"/>
</dbReference>
<dbReference type="SMR" id="F2S6Z9"/>
<dbReference type="HOGENOM" id="CLU_000022_6_1_1"/>
<dbReference type="OrthoDB" id="2891at34384"/>
<dbReference type="Proteomes" id="UP000009172">
    <property type="component" value="Unassembled WGS sequence"/>
</dbReference>
<dbReference type="GO" id="GO:0004315">
    <property type="term" value="F:3-oxoacyl-[acyl-carrier-protein] synthase activity"/>
    <property type="evidence" value="ECO:0007669"/>
    <property type="project" value="InterPro"/>
</dbReference>
<dbReference type="GO" id="GO:0004312">
    <property type="term" value="F:fatty acid synthase activity"/>
    <property type="evidence" value="ECO:0007669"/>
    <property type="project" value="TreeGrafter"/>
</dbReference>
<dbReference type="GO" id="GO:0031177">
    <property type="term" value="F:phosphopantetheine binding"/>
    <property type="evidence" value="ECO:0007669"/>
    <property type="project" value="InterPro"/>
</dbReference>
<dbReference type="GO" id="GO:0006633">
    <property type="term" value="P:fatty acid biosynthetic process"/>
    <property type="evidence" value="ECO:0007669"/>
    <property type="project" value="InterPro"/>
</dbReference>
<dbReference type="GO" id="GO:0044550">
    <property type="term" value="P:secondary metabolite biosynthetic process"/>
    <property type="evidence" value="ECO:0007669"/>
    <property type="project" value="TreeGrafter"/>
</dbReference>
<dbReference type="CDD" id="cd00833">
    <property type="entry name" value="PKS"/>
    <property type="match status" value="1"/>
</dbReference>
<dbReference type="FunFam" id="3.40.366.10:FF:000017">
    <property type="entry name" value="Non-reducing polyketide synthase aptA"/>
    <property type="match status" value="1"/>
</dbReference>
<dbReference type="FunFam" id="3.40.366.10:FF:000002">
    <property type="entry name" value="Probable polyketide synthase 2"/>
    <property type="match status" value="1"/>
</dbReference>
<dbReference type="FunFam" id="1.10.1200.10:FF:000011">
    <property type="entry name" value="Sterigmatocystin biosynthesis polyketide synthase"/>
    <property type="match status" value="1"/>
</dbReference>
<dbReference type="FunFam" id="3.10.129.110:FF:000001">
    <property type="entry name" value="Sterigmatocystin biosynthesis polyketide synthase"/>
    <property type="match status" value="1"/>
</dbReference>
<dbReference type="FunFam" id="3.40.47.10:FF:000031">
    <property type="entry name" value="Sterigmatocystin biosynthesis polyketide synthase"/>
    <property type="match status" value="1"/>
</dbReference>
<dbReference type="Gene3D" id="3.30.70.3290">
    <property type="match status" value="1"/>
</dbReference>
<dbReference type="Gene3D" id="3.40.47.10">
    <property type="match status" value="1"/>
</dbReference>
<dbReference type="Gene3D" id="1.10.1200.10">
    <property type="entry name" value="ACP-like"/>
    <property type="match status" value="1"/>
</dbReference>
<dbReference type="Gene3D" id="3.40.366.10">
    <property type="entry name" value="Malonyl-Coenzyme A Acyl Carrier Protein, domain 2"/>
    <property type="match status" value="2"/>
</dbReference>
<dbReference type="Gene3D" id="3.10.129.110">
    <property type="entry name" value="Polyketide synthase dehydratase"/>
    <property type="match status" value="1"/>
</dbReference>
<dbReference type="InterPro" id="IPR001227">
    <property type="entry name" value="Ac_transferase_dom_sf"/>
</dbReference>
<dbReference type="InterPro" id="IPR036736">
    <property type="entry name" value="ACP-like_sf"/>
</dbReference>
<dbReference type="InterPro" id="IPR014043">
    <property type="entry name" value="Acyl_transferase_dom"/>
</dbReference>
<dbReference type="InterPro" id="IPR016035">
    <property type="entry name" value="Acyl_Trfase/lysoPLipase"/>
</dbReference>
<dbReference type="InterPro" id="IPR018201">
    <property type="entry name" value="Ketoacyl_synth_AS"/>
</dbReference>
<dbReference type="InterPro" id="IPR014031">
    <property type="entry name" value="Ketoacyl_synth_C"/>
</dbReference>
<dbReference type="InterPro" id="IPR014030">
    <property type="entry name" value="Ketoacyl_synth_N"/>
</dbReference>
<dbReference type="InterPro" id="IPR020841">
    <property type="entry name" value="PKS_Beta-ketoAc_synthase_dom"/>
</dbReference>
<dbReference type="InterPro" id="IPR042104">
    <property type="entry name" value="PKS_dehydratase_sf"/>
</dbReference>
<dbReference type="InterPro" id="IPR049900">
    <property type="entry name" value="PKS_mFAS_DH"/>
</dbReference>
<dbReference type="InterPro" id="IPR050091">
    <property type="entry name" value="PKS_NRPS_Biosynth_Enz"/>
</dbReference>
<dbReference type="InterPro" id="IPR020806">
    <property type="entry name" value="PKS_PP-bd"/>
</dbReference>
<dbReference type="InterPro" id="IPR009081">
    <property type="entry name" value="PP-bd_ACP"/>
</dbReference>
<dbReference type="InterPro" id="IPR030918">
    <property type="entry name" value="PT_fungal_PKS"/>
</dbReference>
<dbReference type="InterPro" id="IPR032088">
    <property type="entry name" value="SAT"/>
</dbReference>
<dbReference type="InterPro" id="IPR016039">
    <property type="entry name" value="Thiolase-like"/>
</dbReference>
<dbReference type="NCBIfam" id="TIGR04532">
    <property type="entry name" value="PT_fungal_PKS"/>
    <property type="match status" value="1"/>
</dbReference>
<dbReference type="PANTHER" id="PTHR43775">
    <property type="entry name" value="FATTY ACID SYNTHASE"/>
    <property type="match status" value="1"/>
</dbReference>
<dbReference type="PANTHER" id="PTHR43775:SF24">
    <property type="entry name" value="NON-REDUCING POLYKETIDE SYNTHASE APTA-RELATED"/>
    <property type="match status" value="1"/>
</dbReference>
<dbReference type="Pfam" id="PF00698">
    <property type="entry name" value="Acyl_transf_1"/>
    <property type="match status" value="1"/>
</dbReference>
<dbReference type="Pfam" id="PF22621">
    <property type="entry name" value="CurL-like_PKS_C"/>
    <property type="match status" value="1"/>
</dbReference>
<dbReference type="Pfam" id="PF00109">
    <property type="entry name" value="ketoacyl-synt"/>
    <property type="match status" value="1"/>
</dbReference>
<dbReference type="Pfam" id="PF02801">
    <property type="entry name" value="Ketoacyl-synt_C"/>
    <property type="match status" value="1"/>
</dbReference>
<dbReference type="Pfam" id="PF00550">
    <property type="entry name" value="PP-binding"/>
    <property type="match status" value="1"/>
</dbReference>
<dbReference type="Pfam" id="PF16073">
    <property type="entry name" value="SAT"/>
    <property type="match status" value="1"/>
</dbReference>
<dbReference type="SMART" id="SM00827">
    <property type="entry name" value="PKS_AT"/>
    <property type="match status" value="1"/>
</dbReference>
<dbReference type="SMART" id="SM00825">
    <property type="entry name" value="PKS_KS"/>
    <property type="match status" value="1"/>
</dbReference>
<dbReference type="SMART" id="SM00823">
    <property type="entry name" value="PKS_PP"/>
    <property type="match status" value="1"/>
</dbReference>
<dbReference type="SUPFAM" id="SSF47336">
    <property type="entry name" value="ACP-like"/>
    <property type="match status" value="1"/>
</dbReference>
<dbReference type="SUPFAM" id="SSF52151">
    <property type="entry name" value="FabD/lysophospholipase-like"/>
    <property type="match status" value="1"/>
</dbReference>
<dbReference type="SUPFAM" id="SSF53901">
    <property type="entry name" value="Thiolase-like"/>
    <property type="match status" value="1"/>
</dbReference>
<dbReference type="PROSITE" id="PS50075">
    <property type="entry name" value="CARRIER"/>
    <property type="match status" value="1"/>
</dbReference>
<dbReference type="PROSITE" id="PS00606">
    <property type="entry name" value="KS3_1"/>
    <property type="match status" value="1"/>
</dbReference>
<dbReference type="PROSITE" id="PS52004">
    <property type="entry name" value="KS3_2"/>
    <property type="match status" value="1"/>
</dbReference>
<dbReference type="PROSITE" id="PS52019">
    <property type="entry name" value="PKS_MFAS_DH"/>
    <property type="match status" value="1"/>
</dbReference>
<organism>
    <name type="scientific">Trichophyton tonsurans (strain CBS 112818)</name>
    <name type="common">Scalp ringworm fungus</name>
    <dbReference type="NCBI Taxonomy" id="647933"/>
    <lineage>
        <taxon>Eukaryota</taxon>
        <taxon>Fungi</taxon>
        <taxon>Dikarya</taxon>
        <taxon>Ascomycota</taxon>
        <taxon>Pezizomycotina</taxon>
        <taxon>Eurotiomycetes</taxon>
        <taxon>Eurotiomycetidae</taxon>
        <taxon>Onygenales</taxon>
        <taxon>Arthrodermataceae</taxon>
        <taxon>Trichophyton</taxon>
    </lineage>
</organism>
<feature type="chain" id="PRO_0000437890" description="Non-reducing polyketide synthase nscA">
    <location>
        <begin position="1"/>
        <end position="1802"/>
    </location>
</feature>
<feature type="domain" description="Ketosynthase family 3 (KS3)" evidence="6">
    <location>
        <begin position="396"/>
        <end position="829"/>
    </location>
</feature>
<feature type="domain" description="PKS/mFAS DH" evidence="7">
    <location>
        <begin position="1326"/>
        <end position="1636"/>
    </location>
</feature>
<feature type="domain" description="Carrier" evidence="5">
    <location>
        <begin position="1725"/>
        <end position="1802"/>
    </location>
</feature>
<feature type="region of interest" description="N-terminal acylcarrier protein transacylase domain (SAT)" evidence="4">
    <location>
        <begin position="27"/>
        <end position="261"/>
    </location>
</feature>
<feature type="region of interest" description="Malonyl-CoA:ACP transacylase (MAT) domain" evidence="4">
    <location>
        <begin position="935"/>
        <end position="1235"/>
    </location>
</feature>
<feature type="region of interest" description="Product template (PT) domain" evidence="4">
    <location>
        <begin position="1322"/>
        <end position="1641"/>
    </location>
</feature>
<feature type="region of interest" description="N-terminal hotdog fold" evidence="7">
    <location>
        <begin position="1326"/>
        <end position="1462"/>
    </location>
</feature>
<feature type="region of interest" description="C-terminal hotdog fold" evidence="7">
    <location>
        <begin position="1490"/>
        <end position="1636"/>
    </location>
</feature>
<feature type="region of interest" description="Disordered" evidence="8">
    <location>
        <begin position="1699"/>
        <end position="1729"/>
    </location>
</feature>
<feature type="compositionally biased region" description="Low complexity" evidence="8">
    <location>
        <begin position="1702"/>
        <end position="1713"/>
    </location>
</feature>
<feature type="active site" description="For beta-ketoacyl synthase activity" evidence="6">
    <location>
        <position position="569"/>
    </location>
</feature>
<feature type="active site" description="For beta-ketoacyl synthase activity" evidence="6">
    <location>
        <position position="704"/>
    </location>
</feature>
<feature type="active site" description="For beta-ketoacyl synthase activity" evidence="6">
    <location>
        <position position="747"/>
    </location>
</feature>
<feature type="active site" description="Proton acceptor; for dehydratase activity" evidence="7">
    <location>
        <position position="1358"/>
    </location>
</feature>
<feature type="active site" description="Proton donor; for dehydratase activity" evidence="7">
    <location>
        <position position="1547"/>
    </location>
</feature>
<feature type="modified residue" description="O-(pantetheine 4'-phosphoryl)serine" evidence="5">
    <location>
        <position position="1762"/>
    </location>
</feature>
<reference key="1">
    <citation type="journal article" date="2012" name="MBio">
        <title>Comparative genome analysis of Trichophyton rubrum and related dermatophytes reveals candidate genes involved in infection.</title>
        <authorList>
            <person name="Martinez D.A."/>
            <person name="Oliver B.G."/>
            <person name="Graeser Y."/>
            <person name="Goldberg J.M."/>
            <person name="Li W."/>
            <person name="Martinez-Rossi N.M."/>
            <person name="Monod M."/>
            <person name="Shelest E."/>
            <person name="Barton R.C."/>
            <person name="Birch E."/>
            <person name="Brakhage A.A."/>
            <person name="Chen Z."/>
            <person name="Gurr S.J."/>
            <person name="Heiman D."/>
            <person name="Heitman J."/>
            <person name="Kosti I."/>
            <person name="Rossi A."/>
            <person name="Saif S."/>
            <person name="Samalova M."/>
            <person name="Saunders C.W."/>
            <person name="Shea T."/>
            <person name="Summerbell R.C."/>
            <person name="Xu J."/>
            <person name="Young S."/>
            <person name="Zeng Q."/>
            <person name="Birren B.W."/>
            <person name="Cuomo C.A."/>
            <person name="White T.C."/>
        </authorList>
    </citation>
    <scope>NUCLEOTIDE SEQUENCE [LARGE SCALE GENOMIC DNA]</scope>
    <source>
        <strain>CBS 112818</strain>
    </source>
</reference>
<reference key="2">
    <citation type="journal article" date="2013" name="ACS Synth. Biol.">
        <title>Discovery of cryptic polyketide metabolites from dermatophytes using heterologous expression in Aspergillus nidulans.</title>
        <authorList>
            <person name="Yin W.B."/>
            <person name="Chooi Y.H."/>
            <person name="Smith A.R."/>
            <person name="Cacho R.A."/>
            <person name="Hu Y."/>
            <person name="White T.C."/>
            <person name="Tang Y."/>
        </authorList>
    </citation>
    <scope>FUNCTION</scope>
</reference>
<reference key="3">
    <citation type="journal article" date="2013" name="Org. Lett.">
        <title>Genome mining of a prenylated and immunosuppressive polyketide from pathogenic fungi.</title>
        <authorList>
            <person name="Chooi Y.H."/>
            <person name="Fang J."/>
            <person name="Liu H."/>
            <person name="Filler S.G."/>
            <person name="Wang P."/>
            <person name="Tang Y."/>
        </authorList>
    </citation>
    <scope>FUNCTION</scope>
</reference>
<keyword id="KW-0012">Acyltransferase</keyword>
<keyword id="KW-0511">Multifunctional enzyme</keyword>
<keyword id="KW-0596">Phosphopantetheine</keyword>
<keyword id="KW-0597">Phosphoprotein</keyword>
<keyword id="KW-0808">Transferase</keyword>
<sequence>MDNSMMDSTLRRILFFSNEFPSDDLKDLFRRLDQHSKDRRFRLLSIFLEESTAILKDEVSKLPRPLKELVPPFNSVLSLVDVDFRQGPLGAAMESSMLTILELGLFIGHYESEDTEWDLVPGQSVLAGLSIGILAAAAVALSSSLADVAKTGAEAVRVSFRLGVYVADISTKLEAPQSDGTLSSWAHVVTEMTEASVQDELKQFNTGTHSPELTKVFVSAADKTSVSVSGPPSRIKAAFQHSPVLRYSKSLPLPVYDGLCHASHLYTRSDIDSIINSSESVILPDRSVRLALLSSQTGKPFVAKTASDLFLEIGTELLTGTIYLDNVTAGIVQHLQPQSKETSSCQIDSFRTSLVLRGIHSAVEAELSRDRQLTRRDLVSWISRDFGPRRPRSQASSKLAIVGMACRLPGGANDLDLFWKLLEEGRDTLTTVPPDRFDLNTHYDPTGKTENATQTPYGNFIDRPGFFDAGFFNMSPREAEQTDPMQRLALVTAYEALEMAGVVPGRTPSTHPSRIGTFYGQASDDWRELNASQNISTYAVPGGERSFGNGRINYFFKFSGPSFNLDTACSSGLAAVQAACSALWAGEVDTAIAGGLNVITDPDNYCGLGNAHFLSKTGQCKVWDKDADGYCRADGIGSVVIKRLEDAEADNDNILAVVLGASTNHSAEAISITHPHAGAQKANYRQVLNQAGVNPIDVSYIELHGTGTQAGDAVESESVSDIFAPVTPRRRPDQRLYLGAVKSNIGHGEAAAGIASLLKALLVYQKNLIPKHIGIKSEINPTIPKDLERRNVGLAMQNTPWPRPAGKKRLAVVNSFGAHGGNTTLLLEDAPERVKIQGTEDRITHSILLSAKSKTSLQANMESLLSYLDQHPETSLADLAYTTSSRRMHHNMRFGTLVSSISGLQKMLRSQLDNPNFASEIRPVPNEAPSVILAFTGQGAYYHGMGSELFAEFPYFRAQVQQLDRLAQRLGFPSVVPVIENRIEDAPSSPILTQLSVVILEIALARFWSLLGVSISAVIGHSLGEYAALAVAGVISAADAIYLVGRRAQLVEERCAQASHSMLSVRASEDAIQEMLAVELETASITYEVSCCNTNQDTVIGGPKGEINDIRRALEAKSIKCTILDVPYAFHTAQMNPILDDLETLAKAVPFKAPSIPVISPLLATVIYDVKSLDANYLRRATRETVDFAAAIEAAQDMGLVDSKTIWIDVGPHPICAGLVRSMIPSASAIPSCRRNEDSIATISKGLVTLYLAGLTPSWVEFFKPREREYSLLYLPKYRWNETDYWIPYIGTWTLDKAHLKHGTKPKTPFSGSMSRPSALRTSLVHQITAETVEATTATLHTISDMQHPDFLEAIHGHTMNKCGVATSSIWSDMAFTVGEYLYRRLVPNTKDVHMNLTDVEVLHAQVASKTKGSVQPLVLRAHLDLSTNSMSLAWFNADGETGECAAESFATATIRFEDPEAWRKDWARLAHLVRGRIEVLEQRATEGKASRLSKPLAYALFKNVVDYADRYRGMDSVVLDELEAMAEVTLVPERYGTWHTPPHWIDSVSHLAGLVMNGSDASNTRDYFFVTPGCDSFRLLKKLEPGARYRSYVRMSPLPEDPNMHSGDVYILQGEEIVGMVGMIRFRRVPRLLMDRFFSPPTTTSVAVPVPPLTGATMKCKDITQTAPALPTPAPPIVVSSPVVSSTMACNIPEPAPLLATSSKSSTPKESPIVTPAESERAEPVDNSMTSQCLRLMARETGLEVEALTADASFVQLGVDSLMSLVLSEKFRAELGVEIKSSLFLECPTIGEMTAWIEEYC</sequence>
<protein>
    <recommendedName>
        <fullName evidence="10">Non-reducing polyketide synthase nscA</fullName>
        <ecNumber evidence="12">2.3.1.-</ecNumber>
    </recommendedName>
    <alternativeName>
        <fullName evidence="10">Conidial yellow pigment biosynthesis polyketide synthase nscA</fullName>
    </alternativeName>
    <alternativeName>
        <fullName evidence="10">Neosartoricin B biosynthesis protein A</fullName>
    </alternativeName>
</protein>